<evidence type="ECO:0000250" key="1"/>
<evidence type="ECO:0000255" key="2">
    <source>
        <dbReference type="PROSITE-ProRule" id="PRU00323"/>
    </source>
</evidence>
<evidence type="ECO:0000269" key="3">
    <source>
    </source>
</evidence>
<evidence type="ECO:0000305" key="4"/>
<gene>
    <name type="primary">Hapln1</name>
    <name type="synonym">Crtl1</name>
</gene>
<dbReference type="EMBL" id="M22340">
    <property type="protein sequence ID" value="AAA41535.1"/>
    <property type="molecule type" value="Genomic_DNA"/>
</dbReference>
<dbReference type="EMBL" id="M22336">
    <property type="protein sequence ID" value="AAA41535.1"/>
    <property type="status" value="JOINED"/>
    <property type="molecule type" value="Genomic_DNA"/>
</dbReference>
<dbReference type="EMBL" id="M22337">
    <property type="protein sequence ID" value="AAA41535.1"/>
    <property type="status" value="JOINED"/>
    <property type="molecule type" value="Genomic_DNA"/>
</dbReference>
<dbReference type="EMBL" id="M22339">
    <property type="protein sequence ID" value="AAA41535.1"/>
    <property type="status" value="JOINED"/>
    <property type="molecule type" value="Genomic_DNA"/>
</dbReference>
<dbReference type="EMBL" id="M22340">
    <property type="protein sequence ID" value="AAA41536.1"/>
    <property type="molecule type" value="Genomic_DNA"/>
</dbReference>
<dbReference type="EMBL" id="M22336">
    <property type="protein sequence ID" value="AAA41536.1"/>
    <property type="status" value="JOINED"/>
    <property type="molecule type" value="Genomic_DNA"/>
</dbReference>
<dbReference type="EMBL" id="M22338">
    <property type="protein sequence ID" value="AAA41536.1"/>
    <property type="status" value="JOINED"/>
    <property type="molecule type" value="Genomic_DNA"/>
</dbReference>
<dbReference type="EMBL" id="M22339">
    <property type="protein sequence ID" value="AAA41536.1"/>
    <property type="status" value="JOINED"/>
    <property type="molecule type" value="Genomic_DNA"/>
</dbReference>
<dbReference type="PIR" id="A28654">
    <property type="entry name" value="LKRT2"/>
</dbReference>
<dbReference type="RefSeq" id="XP_006231810.1">
    <molecule id="P03994-1"/>
    <property type="nucleotide sequence ID" value="XM_006231748.5"/>
</dbReference>
<dbReference type="RefSeq" id="XP_038957811.1">
    <molecule id="P03994-1"/>
    <property type="nucleotide sequence ID" value="XM_039101883.2"/>
</dbReference>
<dbReference type="SMR" id="P03994"/>
<dbReference type="BioGRID" id="247990">
    <property type="interactions" value="2"/>
</dbReference>
<dbReference type="FunCoup" id="P03994">
    <property type="interactions" value="640"/>
</dbReference>
<dbReference type="IntAct" id="P03994">
    <property type="interactions" value="2"/>
</dbReference>
<dbReference type="MINT" id="P03994"/>
<dbReference type="STRING" id="10116.ENSRNOP00000040553"/>
<dbReference type="GlyCosmos" id="P03994">
    <property type="glycosylation" value="1 site, No reported glycans"/>
</dbReference>
<dbReference type="GlyGen" id="P03994">
    <property type="glycosylation" value="1 site"/>
</dbReference>
<dbReference type="PhosphoSitePlus" id="P03994"/>
<dbReference type="PaxDb" id="10116-ENSRNOP00000045959"/>
<dbReference type="Ensembl" id="ENSRNOT00000042958.6">
    <molecule id="P03994-1"/>
    <property type="protein sequence ID" value="ENSRNOP00000045959.2"/>
    <property type="gene ID" value="ENSRNOG00000032002.6"/>
</dbReference>
<dbReference type="Ensembl" id="ENSRNOT00000108518.1">
    <molecule id="P03994-2"/>
    <property type="protein sequence ID" value="ENSRNOP00000094436.1"/>
    <property type="gene ID" value="ENSRNOG00000032002.6"/>
</dbReference>
<dbReference type="GeneID" id="29331"/>
<dbReference type="UCSC" id="RGD:2412">
    <molecule id="P03994-1"/>
    <property type="organism name" value="rat"/>
</dbReference>
<dbReference type="AGR" id="RGD:2412"/>
<dbReference type="CTD" id="1404"/>
<dbReference type="RGD" id="2412">
    <property type="gene designation" value="Hapln1"/>
</dbReference>
<dbReference type="eggNOG" id="ENOG502QRAR">
    <property type="taxonomic scope" value="Eukaryota"/>
</dbReference>
<dbReference type="GeneTree" id="ENSGT00940000159267"/>
<dbReference type="HOGENOM" id="CLU_052285_1_0_1"/>
<dbReference type="InParanoid" id="P03994"/>
<dbReference type="OMA" id="ERACHDQ"/>
<dbReference type="OrthoDB" id="5359219at2759"/>
<dbReference type="PhylomeDB" id="P03994"/>
<dbReference type="TreeFam" id="TF332134"/>
<dbReference type="Reactome" id="R-RNO-3000178">
    <property type="pathway name" value="ECM proteoglycans"/>
</dbReference>
<dbReference type="PRO" id="PR:P03994"/>
<dbReference type="Proteomes" id="UP000002494">
    <property type="component" value="Chromosome 2"/>
</dbReference>
<dbReference type="Bgee" id="ENSRNOG00000032002">
    <property type="expression patterns" value="Expressed in frontal cortex and 4 other cell types or tissues"/>
</dbReference>
<dbReference type="GO" id="GO:0031012">
    <property type="term" value="C:extracellular matrix"/>
    <property type="evidence" value="ECO:0000266"/>
    <property type="project" value="RGD"/>
</dbReference>
<dbReference type="GO" id="GO:0005615">
    <property type="term" value="C:extracellular space"/>
    <property type="evidence" value="ECO:0000318"/>
    <property type="project" value="GO_Central"/>
</dbReference>
<dbReference type="GO" id="GO:0072534">
    <property type="term" value="C:perineuronal net"/>
    <property type="evidence" value="ECO:0000318"/>
    <property type="project" value="GO_Central"/>
</dbReference>
<dbReference type="GO" id="GO:0045202">
    <property type="term" value="C:synapse"/>
    <property type="evidence" value="ECO:0000266"/>
    <property type="project" value="RGD"/>
</dbReference>
<dbReference type="GO" id="GO:0005540">
    <property type="term" value="F:hyaluronic acid binding"/>
    <property type="evidence" value="ECO:0000304"/>
    <property type="project" value="RGD"/>
</dbReference>
<dbReference type="GO" id="GO:0005198">
    <property type="term" value="F:structural molecule activity"/>
    <property type="evidence" value="ECO:0000304"/>
    <property type="project" value="RGD"/>
</dbReference>
<dbReference type="GO" id="GO:0007155">
    <property type="term" value="P:cell adhesion"/>
    <property type="evidence" value="ECO:0007669"/>
    <property type="project" value="InterPro"/>
</dbReference>
<dbReference type="GO" id="GO:0007417">
    <property type="term" value="P:central nervous system development"/>
    <property type="evidence" value="ECO:0000318"/>
    <property type="project" value="GO_Central"/>
</dbReference>
<dbReference type="GO" id="GO:0001501">
    <property type="term" value="P:skeletal system development"/>
    <property type="evidence" value="ECO:0000318"/>
    <property type="project" value="GO_Central"/>
</dbReference>
<dbReference type="CDD" id="cd05877">
    <property type="entry name" value="Ig_LP_like"/>
    <property type="match status" value="1"/>
</dbReference>
<dbReference type="CDD" id="cd03518">
    <property type="entry name" value="Link_domain_HAPLN_module_1"/>
    <property type="match status" value="1"/>
</dbReference>
<dbReference type="CDD" id="cd03519">
    <property type="entry name" value="Link_domain_HAPLN_module_2"/>
    <property type="match status" value="1"/>
</dbReference>
<dbReference type="FunFam" id="2.60.40.10:FF:000631">
    <property type="entry name" value="Hyaluronan and proteoglycan link protein 1"/>
    <property type="match status" value="1"/>
</dbReference>
<dbReference type="FunFam" id="3.10.100.10:FF:000001">
    <property type="entry name" value="Hyaluronan proteoglycan link protein 1"/>
    <property type="match status" value="1"/>
</dbReference>
<dbReference type="FunFam" id="3.10.100.10:FF:000002">
    <property type="entry name" value="Hyaluronan proteoglycan link protein 1"/>
    <property type="match status" value="1"/>
</dbReference>
<dbReference type="Gene3D" id="2.60.40.10">
    <property type="entry name" value="Immunoglobulins"/>
    <property type="match status" value="1"/>
</dbReference>
<dbReference type="Gene3D" id="3.10.100.10">
    <property type="entry name" value="Mannose-Binding Protein A, subunit A"/>
    <property type="match status" value="2"/>
</dbReference>
<dbReference type="InterPro" id="IPR016186">
    <property type="entry name" value="C-type_lectin-like/link_sf"/>
</dbReference>
<dbReference type="InterPro" id="IPR016187">
    <property type="entry name" value="CTDL_fold"/>
</dbReference>
<dbReference type="InterPro" id="IPR050691">
    <property type="entry name" value="Hyaluronan_bind_Proteoglycan"/>
</dbReference>
<dbReference type="InterPro" id="IPR007110">
    <property type="entry name" value="Ig-like_dom"/>
</dbReference>
<dbReference type="InterPro" id="IPR036179">
    <property type="entry name" value="Ig-like_dom_sf"/>
</dbReference>
<dbReference type="InterPro" id="IPR013783">
    <property type="entry name" value="Ig-like_fold"/>
</dbReference>
<dbReference type="InterPro" id="IPR003599">
    <property type="entry name" value="Ig_sub"/>
</dbReference>
<dbReference type="InterPro" id="IPR013106">
    <property type="entry name" value="Ig_V-set"/>
</dbReference>
<dbReference type="InterPro" id="IPR000538">
    <property type="entry name" value="Link_dom"/>
</dbReference>
<dbReference type="PANTHER" id="PTHR22804">
    <property type="entry name" value="AGGRECAN/VERSICAN PROTEOGLYCAN"/>
    <property type="match status" value="1"/>
</dbReference>
<dbReference type="PANTHER" id="PTHR22804:SF10">
    <property type="entry name" value="HYALURONAN AND PROTEOGLYCAN LINK PROTEIN 1"/>
    <property type="match status" value="1"/>
</dbReference>
<dbReference type="Pfam" id="PF07686">
    <property type="entry name" value="V-set"/>
    <property type="match status" value="1"/>
</dbReference>
<dbReference type="Pfam" id="PF00193">
    <property type="entry name" value="Xlink"/>
    <property type="match status" value="2"/>
</dbReference>
<dbReference type="PRINTS" id="PR01265">
    <property type="entry name" value="LINKMODULE"/>
</dbReference>
<dbReference type="SMART" id="SM00409">
    <property type="entry name" value="IG"/>
    <property type="match status" value="1"/>
</dbReference>
<dbReference type="SMART" id="SM00406">
    <property type="entry name" value="IGv"/>
    <property type="match status" value="1"/>
</dbReference>
<dbReference type="SMART" id="SM00445">
    <property type="entry name" value="LINK"/>
    <property type="match status" value="2"/>
</dbReference>
<dbReference type="SUPFAM" id="SSF56436">
    <property type="entry name" value="C-type lectin-like"/>
    <property type="match status" value="2"/>
</dbReference>
<dbReference type="SUPFAM" id="SSF48726">
    <property type="entry name" value="Immunoglobulin"/>
    <property type="match status" value="1"/>
</dbReference>
<dbReference type="PROSITE" id="PS50835">
    <property type="entry name" value="IG_LIKE"/>
    <property type="match status" value="1"/>
</dbReference>
<dbReference type="PROSITE" id="PS01241">
    <property type="entry name" value="LINK_1"/>
    <property type="match status" value="2"/>
</dbReference>
<dbReference type="PROSITE" id="PS50963">
    <property type="entry name" value="LINK_2"/>
    <property type="match status" value="2"/>
</dbReference>
<accession>P03994</accession>
<protein>
    <recommendedName>
        <fullName>Hyaluronan and proteoglycan link protein 1</fullName>
    </recommendedName>
    <alternativeName>
        <fullName>Cartilage-linking protein 1</fullName>
        <shortName>Cartilage-link protein</shortName>
    </alternativeName>
    <alternativeName>
        <fullName>Proteoglycan link protein</fullName>
    </alternativeName>
</protein>
<organism>
    <name type="scientific">Rattus norvegicus</name>
    <name type="common">Rat</name>
    <dbReference type="NCBI Taxonomy" id="10116"/>
    <lineage>
        <taxon>Eukaryota</taxon>
        <taxon>Metazoa</taxon>
        <taxon>Chordata</taxon>
        <taxon>Craniata</taxon>
        <taxon>Vertebrata</taxon>
        <taxon>Euteleostomi</taxon>
        <taxon>Mammalia</taxon>
        <taxon>Eutheria</taxon>
        <taxon>Euarchontoglires</taxon>
        <taxon>Glires</taxon>
        <taxon>Rodentia</taxon>
        <taxon>Myomorpha</taxon>
        <taxon>Muroidea</taxon>
        <taxon>Muridae</taxon>
        <taxon>Murinae</taxon>
        <taxon>Rattus</taxon>
    </lineage>
</organism>
<name>HPLN1_RAT</name>
<reference key="1">
    <citation type="journal article" date="1988" name="J. Biol. Chem.">
        <title>Alternative splicing generates two different mRNA species for rat link protein.</title>
        <authorList>
            <person name="Rhodes C."/>
            <person name="Doege K."/>
            <person name="Sasaki M."/>
            <person name="Yamada Y."/>
        </authorList>
    </citation>
    <scope>NUCLEOTIDE SEQUENCE [GENOMIC DNA]</scope>
</reference>
<reference key="2">
    <citation type="journal article" date="1986" name="Proc. Natl. Acad. Sci. U.S.A.">
        <title>Link protein cDNA sequence reveals a tandemly repeated protein structure.</title>
        <authorList>
            <person name="Doege K."/>
            <person name="Hassell J.R."/>
            <person name="Caterson B."/>
            <person name="Yamada Y."/>
        </authorList>
    </citation>
    <scope>NUCLEOTIDE SEQUENCE [GENOMIC DNA] OF 126-354</scope>
</reference>
<reference key="3">
    <citation type="journal article" date="1986" name="J. Biol. Chem.">
        <title>The primary structure of link protein from rat chondrosarcoma proteoglycan aggregate.</title>
        <authorList>
            <person name="Neame P.J."/>
            <person name="Christner J.E."/>
            <person name="Baker J.R."/>
        </authorList>
    </citation>
    <scope>PROTEIN SEQUENCE OF 16-354</scope>
</reference>
<feature type="propeptide" id="PRO_0000013183" evidence="1">
    <location>
        <begin position="1"/>
        <end position="9"/>
    </location>
</feature>
<feature type="chain" id="PRO_0000013184" description="Hyaluronan and proteoglycan link protein 1">
    <location>
        <begin position="10"/>
        <end position="354"/>
    </location>
</feature>
<feature type="domain" description="Ig-like V-type">
    <location>
        <begin position="38"/>
        <end position="152"/>
    </location>
</feature>
<feature type="domain" description="Link 1" evidence="2">
    <location>
        <begin position="159"/>
        <end position="254"/>
    </location>
</feature>
<feature type="domain" description="Link 2" evidence="2">
    <location>
        <begin position="259"/>
        <end position="351"/>
    </location>
</feature>
<feature type="glycosylation site" description="N-linked (GlcNAc...) asparagine">
    <location>
        <position position="56"/>
    </location>
</feature>
<feature type="disulfide bond" evidence="3">
    <location>
        <begin position="61"/>
        <end position="139"/>
    </location>
</feature>
<feature type="disulfide bond" evidence="3">
    <location>
        <begin position="181"/>
        <end position="252"/>
    </location>
</feature>
<feature type="disulfide bond" evidence="3">
    <location>
        <begin position="205"/>
        <end position="226"/>
    </location>
</feature>
<feature type="disulfide bond" evidence="3">
    <location>
        <begin position="279"/>
        <end position="349"/>
    </location>
</feature>
<feature type="disulfide bond" evidence="3">
    <location>
        <begin position="304"/>
        <end position="325"/>
    </location>
</feature>
<feature type="splice variant" id="VSP_005301" description="In isoform Short." evidence="4">
    <original>AENGPRLLVEAEQAKVFSHRGGNVTLPCKFYRDPTAFGSGIHKIRIKWTKLTSDY</original>
    <variation>DCTAFWKLIRGRQRSSASPVGILTMPCCFPWRKHYTWKGIKSLKLPSLAISDRTS</variation>
    <location>
        <begin position="34"/>
        <end position="88"/>
    </location>
</feature>
<feature type="splice variant" id="VSP_005302" description="In isoform Short." evidence="4">
    <location>
        <begin position="89"/>
        <end position="158"/>
    </location>
</feature>
<feature type="sequence conflict" description="In Ref. 3; AA sequence." evidence="4" ref="3">
    <original>R</original>
    <variation>W</variation>
    <location>
        <position position="322"/>
    </location>
</feature>
<keyword id="KW-0025">Alternative splicing</keyword>
<keyword id="KW-0903">Direct protein sequencing</keyword>
<keyword id="KW-1015">Disulfide bond</keyword>
<keyword id="KW-0272">Extracellular matrix</keyword>
<keyword id="KW-0325">Glycoprotein</keyword>
<keyword id="KW-0373">Hyaluronic acid</keyword>
<keyword id="KW-0393">Immunoglobulin domain</keyword>
<keyword id="KW-1185">Reference proteome</keyword>
<keyword id="KW-0677">Repeat</keyword>
<keyword id="KW-0964">Secreted</keyword>
<sequence length="354" mass="40262">MRSLLFLVLISVCRADHLSDSYTPDQDRVIHIQAENGPRLLVEAEQAKVFSHRGGNVTLPCKFYRDPTAFGSGIHKIRIKWTKLTSDYLREVDVFVSMGYHKKTYGGYQGRVFLKGGSDNDASLIITDLTLEDYGRYKCEVIEGLEDDTAVVALELQGVVFPYFPRLGRYNLNFHEARQACLDQDAVIASFDQLYDAWRGGLDWCNAGWLSDGSVQYPITKPREPCGGQNTVPGVRNYGFWDKDKSRYDVFCFTSNFNGRFYYLIHPTKLTYDEAVQACLNDGAQIAKVGQIFAAWKLLGYDRCDAGWLADGSVRYPISRPRRRCSPTEAAVRFVGFPDKKHKLYGVYCFRAYN</sequence>
<comment type="function">
    <text>Stabilizes the aggregates of proteoglycan monomers with hyaluronic acid in the extracellular cartilage matrix.</text>
</comment>
<comment type="subcellular location">
    <subcellularLocation>
        <location>Secreted</location>
        <location>Extracellular space</location>
        <location>Extracellular matrix</location>
    </subcellularLocation>
</comment>
<comment type="alternative products">
    <event type="alternative splicing"/>
    <isoform>
        <id>P03994-1</id>
        <name>Long</name>
        <sequence type="displayed"/>
    </isoform>
    <isoform>
        <id>P03994-2</id>
        <name>Short</name>
        <sequence type="described" ref="VSP_005301 VSP_005302"/>
    </isoform>
</comment>
<comment type="similarity">
    <text evidence="4">Belongs to the HAPLN family.</text>
</comment>
<proteinExistence type="evidence at protein level"/>